<reference key="1">
    <citation type="submission" date="2006-04" db="EMBL/GenBank/DDBJ databases">
        <title>Cloning and bioinformatic analysis of cDNA encoding cattle SMAD4 gene.</title>
        <authorList>
            <person name="Zhang X."/>
            <person name="Xu S."/>
            <person name="Zhang L."/>
            <person name="Gao X."/>
            <person name="Ren H."/>
            <person name="Chen J."/>
        </authorList>
    </citation>
    <scope>NUCLEOTIDE SEQUENCE [MRNA]</scope>
</reference>
<gene>
    <name type="primary">SMAD4</name>
</gene>
<accession>Q1HE26</accession>
<organism>
    <name type="scientific">Bos taurus</name>
    <name type="common">Bovine</name>
    <dbReference type="NCBI Taxonomy" id="9913"/>
    <lineage>
        <taxon>Eukaryota</taxon>
        <taxon>Metazoa</taxon>
        <taxon>Chordata</taxon>
        <taxon>Craniata</taxon>
        <taxon>Vertebrata</taxon>
        <taxon>Euteleostomi</taxon>
        <taxon>Mammalia</taxon>
        <taxon>Eutheria</taxon>
        <taxon>Laurasiatheria</taxon>
        <taxon>Artiodactyla</taxon>
        <taxon>Ruminantia</taxon>
        <taxon>Pecora</taxon>
        <taxon>Bovidae</taxon>
        <taxon>Bovinae</taxon>
        <taxon>Bos</taxon>
    </lineage>
</organism>
<feature type="chain" id="PRO_0000252360" description="Mothers against decapentaplegic homolog 4">
    <location>
        <begin position="1"/>
        <end position="553"/>
    </location>
</feature>
<feature type="domain" description="MH1" evidence="5">
    <location>
        <begin position="18"/>
        <end position="142"/>
    </location>
</feature>
<feature type="domain" description="MH2" evidence="6">
    <location>
        <begin position="324"/>
        <end position="553"/>
    </location>
</feature>
<feature type="region of interest" description="Mediates interaction with ZBTB7A" evidence="4">
    <location>
        <begin position="1"/>
        <end position="323"/>
    </location>
</feature>
<feature type="region of interest" description="Required for interaction with TSC22D1" evidence="4">
    <location>
        <begin position="44"/>
        <end position="69"/>
    </location>
</feature>
<feature type="region of interest" description="Disordered" evidence="7">
    <location>
        <begin position="168"/>
        <end position="194"/>
    </location>
</feature>
<feature type="region of interest" description="SAD">
    <location>
        <begin position="275"/>
        <end position="321"/>
    </location>
</feature>
<feature type="compositionally biased region" description="Polar residues" evidence="7">
    <location>
        <begin position="170"/>
        <end position="194"/>
    </location>
</feature>
<feature type="binding site" evidence="1">
    <location>
        <position position="71"/>
    </location>
    <ligand>
        <name>Zn(2+)</name>
        <dbReference type="ChEBI" id="CHEBI:29105"/>
    </ligand>
</feature>
<feature type="binding site" evidence="1">
    <location>
        <position position="115"/>
    </location>
    <ligand>
        <name>Zn(2+)</name>
        <dbReference type="ChEBI" id="CHEBI:29105"/>
    </ligand>
</feature>
<feature type="binding site" evidence="1">
    <location>
        <position position="127"/>
    </location>
    <ligand>
        <name>Zn(2+)</name>
        <dbReference type="ChEBI" id="CHEBI:29105"/>
    </ligand>
</feature>
<feature type="binding site" evidence="1">
    <location>
        <position position="132"/>
    </location>
    <ligand>
        <name>Zn(2+)</name>
        <dbReference type="ChEBI" id="CHEBI:29105"/>
    </ligand>
</feature>
<feature type="site" description="Necessary for heterotrimerization" evidence="1">
    <location>
        <position position="516"/>
    </location>
</feature>
<feature type="modified residue" description="N6-acetyllysine" evidence="4">
    <location>
        <position position="37"/>
    </location>
</feature>
<feature type="modified residue" description="N6-acetyllysine" evidence="4">
    <location>
        <position position="429"/>
    </location>
</feature>
<feature type="modified residue" description="N6-acetyllysine" evidence="4">
    <location>
        <position position="508"/>
    </location>
</feature>
<feature type="cross-link" description="Glycyl lysine isopeptide (Lys-Gly) (interchain with G-Cter in SUMO2)" evidence="4">
    <location>
        <position position="113"/>
    </location>
</feature>
<feature type="cross-link" description="Glycyl lysine isopeptide (Lys-Gly) (interchain with G-Cter in ubiquitin)" evidence="4">
    <location>
        <position position="520"/>
    </location>
</feature>
<protein>
    <recommendedName>
        <fullName>Mothers against decapentaplegic homolog 4</fullName>
        <shortName>MAD homolog 4</shortName>
        <shortName>Mothers against DPP homolog 4</shortName>
    </recommendedName>
    <alternativeName>
        <fullName>SMAD family member 4</fullName>
        <shortName>SMAD 4</shortName>
        <shortName>Smad4</shortName>
    </alternativeName>
</protein>
<evidence type="ECO:0000250" key="1"/>
<evidence type="ECO:0000250" key="2">
    <source>
        <dbReference type="UniProtKB" id="O70437"/>
    </source>
</evidence>
<evidence type="ECO:0000250" key="3">
    <source>
        <dbReference type="UniProtKB" id="P97471"/>
    </source>
</evidence>
<evidence type="ECO:0000250" key="4">
    <source>
        <dbReference type="UniProtKB" id="Q13485"/>
    </source>
</evidence>
<evidence type="ECO:0000255" key="5">
    <source>
        <dbReference type="PROSITE-ProRule" id="PRU00438"/>
    </source>
</evidence>
<evidence type="ECO:0000255" key="6">
    <source>
        <dbReference type="PROSITE-ProRule" id="PRU00439"/>
    </source>
</evidence>
<evidence type="ECO:0000256" key="7">
    <source>
        <dbReference type="SAM" id="MobiDB-lite"/>
    </source>
</evidence>
<evidence type="ECO:0000305" key="8"/>
<comment type="function">
    <text evidence="1">Common SMAD (co-SMAD) is the coactivator and mediator of signal transduction by TGF-beta (transforming growth factor). Component of the heterotrimeric SMAD2/SMAD3-SMAD4 complex that forms in the nucleus and is required for the TGF-mediated signaling. Promotes binding of the SMAD2/SMAD4/FAST-1 complex to DNA and provides an activation function required for SMAD1 or SMAD2 to stimulate transcription. Component of the multimeric SMAD3/SMAD4/JUN/FOS complex which forms at the AP1 promoter site; required for synergistic transcriptional activity in response to TGF-beta. Acts synergistically with SMAD1 and YY1 in bone morphogenetic protein (BMP)-mediated cardiac-specific gene expression. Binds to SMAD binding elements (SBEs) (5'-GTCT/AGAC-3') within BMP response element (BMPRE) of cardiac activating regions. May act as a tumor suppressor. Positively regulates PDPK1 kinase activity by stimulating its dissociation from the 14-3-3 protein YWHAQ which acts as a negative regulator. In muscle physiology, plays a central role in the balance between atrophy and hypertrophy. When recruited by MSTN, promotes atrophy response via phosphorylated SMAD2/4. MSTN decrease causes SMAD4 release and subsequent recruitment by the BMP pathway to promote hypertrophy via phosphorylated SMAD1/5/8 (By similarity).</text>
</comment>
<comment type="subunit">
    <text evidence="2 3 4">Monomer; in the absence of TGF-beta activation (By similarity). Heterotrimer; on TGF-beta activation (By similarity). Heterotrimer composed of two molecules of a C-terminally phosphorylated R-SMAD molecule, SMAD2 or SMAD3, and one molecule of SMAD4 to form the transcriptional active SMAD2/SMAD3-SMAD4 complex (By similarity). Found in a ternary complex composed of SMAD4, STK11/LKB1 and STK11IP. Found in a complex with SMAD1 and YY1. Identified in a complex that contains at least ZNF451, SMAD2, SMAD3 and SMAD4. Interacts with ATF2, COPS5, DACH1, MSG1, SKI, STK11/LKB1, STK11IP and TRIM33. Associates with ZNF423 or ZNF521 in response to BMP2 leading to activate transcription of BMP target genes. Interacts with USP9X. Interacts with RBPMS. Interacts with WWTR1 (via coiled-coil domain). Interacts with CITED1 and CITED2. Interacts with PDPK1 (via PH domain). Interacts with VPS39; this interaction affects heterodimer formation with SMAD3, but not with SMAD2, and leads to inhibition of SMAD3-dependent transcription activation. Interactions with VPS39 and SMAD2 may be mutually exclusive. Interacts (via MH2 domain) with ZNF451 (via N-terminal zinc-finger domains). Interacts with ZC3H3. Interacts weakly with ZNF8. Interacts with NUP93 and IPO7; translocates SMAD4 to the nucleus through the NPC upon BMP7 stimulation resulting in activation of SMAD4 signaling (By similarity). Interacts with CREB3L1, the interaction takes place upon TGFB1 induction and SMAD4 acts as a CREB3L1 coactivator to induce the expression of genes involved in the assembly of collagen extracellular matrix. Interacts with DLX1 (By similarity). Interacts with ZBTB7A; the interaction is direct and stimulated by TGFB1 (By similarity). Interacts with CREBBP; the recruitment of this transcriptional coactivator is negatively regulated by ZBTB7A (By similarity). Interacts with EP300; the interaction with this transcriptional coactivator is negatively regulated by ZBTB7A (By similarity). Interacts with HDAC1 (By similarity). Interacts (via MH2 domain) with ZMIZ1 (via SP-RING-type domain); in the TGF-beta signaling pathway increases the activity of the SMAD3/SMAD4 transcriptional complex (By similarity). Interacts (via N-terminus) with TSC22D1 (By similarity).</text>
</comment>
<comment type="subcellular location">
    <subcellularLocation>
        <location evidence="4">Cytoplasm</location>
    </subcellularLocation>
    <subcellularLocation>
        <location evidence="4">Nucleus</location>
    </subcellularLocation>
    <text evidence="4">Cytoplasmic in the absence of ligand. Migrates to the nucleus when complexed with R-SMAD. PDPK1 prevents its nuclear translocation in response to TGF-beta.</text>
</comment>
<comment type="domain">
    <text evidence="1">The MH1 domain is required for DNA binding.</text>
</comment>
<comment type="domain">
    <text evidence="1">The MH2 domain is required for both homomeric and heteromeric interactions and for transcriptional regulation. Sufficient for nuclear import (By similarity).</text>
</comment>
<comment type="PTM">
    <text evidence="1">Monoubiquitinated on Lys-520 by E3 ubiquitin-protein ligase TRIM33. Monoubiquitination hampers its ability to form a stable complex with activated SMAD2/3 resulting in inhibition of TGF-beta/BMP signaling cascade (By similarity).</text>
</comment>
<comment type="PTM">
    <text evidence="1">Phosphorylated by PDPK1.</text>
</comment>
<comment type="similarity">
    <text evidence="8">Belongs to the dwarfin/SMAD family.</text>
</comment>
<sequence length="553" mass="60542">MDNMSITNTPTSNDACLSIVHSLMCHRQGGESETFAKRAIESLVKKLKEKKDELDSLITAITTNGAHPSKCVTIQRTLDGRLQVAGRKGFPHVIYARLWRWPDLHKNELKHVKYCQYAFDLKCDSVCVNPYHYERVVSPGIDLSGLTLQSNAPPSMLVKDEYVHDFEGQPSLSTEGHSIQTIQHPPSNRASTETYSTPALLAPSESNATSTTNFPNIPVASTSQPASILAGSHSEGLLQIASGPQPGQQQNGFTGQPATYHHNSTTTWTGGRTAPYTPNLPHHQNGHLQHHPPMPPHPGHYWPPVHNELAFQPPISNHPAPEYWCSIAYFEMDVQVGETFKVPSSCPIVTVDGYVDPSGGDRFCLGQLSNVHRTEAIERARLHIGKGVQLECKGEGDVWVRCLSDHAVFVQSYYLDREAGRAPGDAVHKIYPSAYIKVFDLRQCHRQMQQQAATAQAAAAAQAAAVAGNIPGPGSVGGIAPAISLSAAAGIGVDDLRRLCILRMSFVKGWGPDYPRQSIKETPCWIEIHLHRALQLLDEVLHTMPIADPQPLD</sequence>
<keyword id="KW-0007">Acetylation</keyword>
<keyword id="KW-0963">Cytoplasm</keyword>
<keyword id="KW-0238">DNA-binding</keyword>
<keyword id="KW-1017">Isopeptide bond</keyword>
<keyword id="KW-0479">Metal-binding</keyword>
<keyword id="KW-0539">Nucleus</keyword>
<keyword id="KW-1185">Reference proteome</keyword>
<keyword id="KW-0804">Transcription</keyword>
<keyword id="KW-0805">Transcription regulation</keyword>
<keyword id="KW-0832">Ubl conjugation</keyword>
<keyword id="KW-0862">Zinc</keyword>
<name>SMAD4_BOVIN</name>
<dbReference type="EMBL" id="DQ494856">
    <property type="protein sequence ID" value="ABF50052.1"/>
    <property type="molecule type" value="mRNA"/>
</dbReference>
<dbReference type="RefSeq" id="NP_001069677.1">
    <property type="nucleotide sequence ID" value="NM_001076209.1"/>
</dbReference>
<dbReference type="SMR" id="Q1HE26"/>
<dbReference type="FunCoup" id="Q1HE26">
    <property type="interactions" value="4134"/>
</dbReference>
<dbReference type="STRING" id="9913.ENSBTAP00000009081"/>
<dbReference type="PaxDb" id="9913-ENSBTAP00000009081"/>
<dbReference type="GeneID" id="540248"/>
<dbReference type="KEGG" id="bta:540248"/>
<dbReference type="CTD" id="4089"/>
<dbReference type="eggNOG" id="KOG3701">
    <property type="taxonomic scope" value="Eukaryota"/>
</dbReference>
<dbReference type="InParanoid" id="Q1HE26"/>
<dbReference type="OrthoDB" id="5875866at2759"/>
<dbReference type="Proteomes" id="UP000009136">
    <property type="component" value="Unplaced"/>
</dbReference>
<dbReference type="GO" id="GO:0005737">
    <property type="term" value="C:cytoplasm"/>
    <property type="evidence" value="ECO:0007669"/>
    <property type="project" value="UniProtKB-SubCell"/>
</dbReference>
<dbReference type="GO" id="GO:0071144">
    <property type="term" value="C:heteromeric SMAD protein complex"/>
    <property type="evidence" value="ECO:0000318"/>
    <property type="project" value="GO_Central"/>
</dbReference>
<dbReference type="GO" id="GO:0000981">
    <property type="term" value="F:DNA-binding transcription factor activity, RNA polymerase II-specific"/>
    <property type="evidence" value="ECO:0000318"/>
    <property type="project" value="GO_Central"/>
</dbReference>
<dbReference type="GO" id="GO:0070411">
    <property type="term" value="F:I-SMAD binding"/>
    <property type="evidence" value="ECO:0000318"/>
    <property type="project" value="GO_Central"/>
</dbReference>
<dbReference type="GO" id="GO:0046872">
    <property type="term" value="F:metal ion binding"/>
    <property type="evidence" value="ECO:0007669"/>
    <property type="project" value="UniProtKB-KW"/>
</dbReference>
<dbReference type="GO" id="GO:0000978">
    <property type="term" value="F:RNA polymerase II cis-regulatory region sequence-specific DNA binding"/>
    <property type="evidence" value="ECO:0000318"/>
    <property type="project" value="GO_Central"/>
</dbReference>
<dbReference type="GO" id="GO:0009653">
    <property type="term" value="P:anatomical structure morphogenesis"/>
    <property type="evidence" value="ECO:0000318"/>
    <property type="project" value="GO_Central"/>
</dbReference>
<dbReference type="GO" id="GO:0030509">
    <property type="term" value="P:BMP signaling pathway"/>
    <property type="evidence" value="ECO:0000318"/>
    <property type="project" value="GO_Central"/>
</dbReference>
<dbReference type="GO" id="GO:0030154">
    <property type="term" value="P:cell differentiation"/>
    <property type="evidence" value="ECO:0000318"/>
    <property type="project" value="GO_Central"/>
</dbReference>
<dbReference type="GO" id="GO:0006357">
    <property type="term" value="P:regulation of transcription by RNA polymerase II"/>
    <property type="evidence" value="ECO:0000318"/>
    <property type="project" value="GO_Central"/>
</dbReference>
<dbReference type="GO" id="GO:0060395">
    <property type="term" value="P:SMAD protein signal transduction"/>
    <property type="evidence" value="ECO:0000318"/>
    <property type="project" value="GO_Central"/>
</dbReference>
<dbReference type="GO" id="GO:0007179">
    <property type="term" value="P:transforming growth factor beta receptor signaling pathway"/>
    <property type="evidence" value="ECO:0000318"/>
    <property type="project" value="GO_Central"/>
</dbReference>
<dbReference type="CDD" id="cd10492">
    <property type="entry name" value="MH1_SMAD_4"/>
    <property type="match status" value="1"/>
</dbReference>
<dbReference type="CDD" id="cd10498">
    <property type="entry name" value="MH2_SMAD_4"/>
    <property type="match status" value="1"/>
</dbReference>
<dbReference type="FunFam" id="2.60.200.10:FF:000002">
    <property type="entry name" value="Mothers against decapentaplegic homolog"/>
    <property type="match status" value="1"/>
</dbReference>
<dbReference type="FunFam" id="3.90.520.10:FF:000002">
    <property type="entry name" value="Mothers against decapentaplegic homolog"/>
    <property type="match status" value="1"/>
</dbReference>
<dbReference type="Gene3D" id="2.60.200.10">
    <property type="match status" value="1"/>
</dbReference>
<dbReference type="Gene3D" id="3.90.520.10">
    <property type="entry name" value="SMAD MH1 domain"/>
    <property type="match status" value="1"/>
</dbReference>
<dbReference type="InterPro" id="IPR013790">
    <property type="entry name" value="Dwarfin"/>
</dbReference>
<dbReference type="InterPro" id="IPR003619">
    <property type="entry name" value="MAD_homology1_Dwarfin-type"/>
</dbReference>
<dbReference type="InterPro" id="IPR013019">
    <property type="entry name" value="MAD_homology_MH1"/>
</dbReference>
<dbReference type="InterPro" id="IPR017855">
    <property type="entry name" value="SMAD-like_dom_sf"/>
</dbReference>
<dbReference type="InterPro" id="IPR001132">
    <property type="entry name" value="SMAD_dom_Dwarfin-type"/>
</dbReference>
<dbReference type="InterPro" id="IPR008984">
    <property type="entry name" value="SMAD_FHA_dom_sf"/>
</dbReference>
<dbReference type="InterPro" id="IPR036578">
    <property type="entry name" value="SMAD_MH1_sf"/>
</dbReference>
<dbReference type="PANTHER" id="PTHR13703:SF63">
    <property type="entry name" value="MOTHERS AGAINST DECAPENTAPLEGIC HOMOLOG 4"/>
    <property type="match status" value="1"/>
</dbReference>
<dbReference type="PANTHER" id="PTHR13703">
    <property type="entry name" value="SMAD"/>
    <property type="match status" value="1"/>
</dbReference>
<dbReference type="Pfam" id="PF03165">
    <property type="entry name" value="MH1"/>
    <property type="match status" value="1"/>
</dbReference>
<dbReference type="Pfam" id="PF03166">
    <property type="entry name" value="MH2"/>
    <property type="match status" value="1"/>
</dbReference>
<dbReference type="SMART" id="SM00523">
    <property type="entry name" value="DWA"/>
    <property type="match status" value="1"/>
</dbReference>
<dbReference type="SMART" id="SM00524">
    <property type="entry name" value="DWB"/>
    <property type="match status" value="1"/>
</dbReference>
<dbReference type="SUPFAM" id="SSF56366">
    <property type="entry name" value="SMAD MH1 domain"/>
    <property type="match status" value="1"/>
</dbReference>
<dbReference type="SUPFAM" id="SSF49879">
    <property type="entry name" value="SMAD/FHA domain"/>
    <property type="match status" value="1"/>
</dbReference>
<dbReference type="PROSITE" id="PS51075">
    <property type="entry name" value="MH1"/>
    <property type="match status" value="1"/>
</dbReference>
<dbReference type="PROSITE" id="PS51076">
    <property type="entry name" value="MH2"/>
    <property type="match status" value="1"/>
</dbReference>
<proteinExistence type="evidence at transcript level"/>